<proteinExistence type="evidence at protein level"/>
<organism>
    <name type="scientific">Arabidopsis thaliana</name>
    <name type="common">Mouse-ear cress</name>
    <dbReference type="NCBI Taxonomy" id="3702"/>
    <lineage>
        <taxon>Eukaryota</taxon>
        <taxon>Viridiplantae</taxon>
        <taxon>Streptophyta</taxon>
        <taxon>Embryophyta</taxon>
        <taxon>Tracheophyta</taxon>
        <taxon>Spermatophyta</taxon>
        <taxon>Magnoliopsida</taxon>
        <taxon>eudicotyledons</taxon>
        <taxon>Gunneridae</taxon>
        <taxon>Pentapetalae</taxon>
        <taxon>rosids</taxon>
        <taxon>malvids</taxon>
        <taxon>Brassicales</taxon>
        <taxon>Brassicaceae</taxon>
        <taxon>Camelineae</taxon>
        <taxon>Arabidopsis</taxon>
    </lineage>
</organism>
<name>ATL45_ARATH</name>
<dbReference type="EC" id="2.3.2.27" evidence="8"/>
<dbReference type="EMBL" id="AF078825">
    <property type="protein sequence ID" value="AAC68674.1"/>
    <property type="molecule type" value="mRNA"/>
</dbReference>
<dbReference type="EMBL" id="DQ059126">
    <property type="protein sequence ID" value="AAY57612.1"/>
    <property type="molecule type" value="mRNA"/>
</dbReference>
<dbReference type="EMBL" id="AL117188">
    <property type="protein sequence ID" value="CAB54876.1"/>
    <property type="molecule type" value="Genomic_DNA"/>
</dbReference>
<dbReference type="EMBL" id="AL161587">
    <property type="protein sequence ID" value="CAB80264.1"/>
    <property type="molecule type" value="Genomic_DNA"/>
</dbReference>
<dbReference type="EMBL" id="CP002687">
    <property type="protein sequence ID" value="AEE86520.1"/>
    <property type="molecule type" value="Genomic_DNA"/>
</dbReference>
<dbReference type="EMBL" id="BT030633">
    <property type="protein sequence ID" value="ABR46213.1"/>
    <property type="molecule type" value="mRNA"/>
</dbReference>
<dbReference type="EMBL" id="AY087082">
    <property type="protein sequence ID" value="AAM64643.1"/>
    <property type="molecule type" value="mRNA"/>
</dbReference>
<dbReference type="PIR" id="T41745">
    <property type="entry name" value="T41745"/>
</dbReference>
<dbReference type="RefSeq" id="NP_195273.1">
    <property type="nucleotide sequence ID" value="NM_119713.4"/>
</dbReference>
<dbReference type="SMR" id="Q9ZT49"/>
<dbReference type="STRING" id="3702.Q9ZT49"/>
<dbReference type="PaxDb" id="3702-AT4G35480.1"/>
<dbReference type="ProteomicsDB" id="246761"/>
<dbReference type="EnsemblPlants" id="AT4G35480.1">
    <property type="protein sequence ID" value="AT4G35480.1"/>
    <property type="gene ID" value="AT4G35480"/>
</dbReference>
<dbReference type="GeneID" id="829700"/>
<dbReference type="Gramene" id="AT4G35480.1">
    <property type="protein sequence ID" value="AT4G35480.1"/>
    <property type="gene ID" value="AT4G35480"/>
</dbReference>
<dbReference type="KEGG" id="ath:AT4G35480"/>
<dbReference type="Araport" id="AT4G35480"/>
<dbReference type="TAIR" id="AT4G35480">
    <property type="gene designation" value="RHA3B"/>
</dbReference>
<dbReference type="eggNOG" id="KOG0800">
    <property type="taxonomic scope" value="Eukaryota"/>
</dbReference>
<dbReference type="HOGENOM" id="CLU_013137_9_1_1"/>
<dbReference type="InParanoid" id="Q9ZT49"/>
<dbReference type="OMA" id="CITEFSE"/>
<dbReference type="PhylomeDB" id="Q9ZT49"/>
<dbReference type="UniPathway" id="UPA00143"/>
<dbReference type="PRO" id="PR:Q9ZT49"/>
<dbReference type="Proteomes" id="UP000006548">
    <property type="component" value="Chromosome 4"/>
</dbReference>
<dbReference type="ExpressionAtlas" id="Q9ZT49">
    <property type="expression patterns" value="baseline and differential"/>
</dbReference>
<dbReference type="GO" id="GO:0016020">
    <property type="term" value="C:membrane"/>
    <property type="evidence" value="ECO:0007669"/>
    <property type="project" value="UniProtKB-SubCell"/>
</dbReference>
<dbReference type="GO" id="GO:0061630">
    <property type="term" value="F:ubiquitin protein ligase activity"/>
    <property type="evidence" value="ECO:0000315"/>
    <property type="project" value="UniProtKB"/>
</dbReference>
<dbReference type="GO" id="GO:0008270">
    <property type="term" value="F:zinc ion binding"/>
    <property type="evidence" value="ECO:0007669"/>
    <property type="project" value="UniProtKB-KW"/>
</dbReference>
<dbReference type="GO" id="GO:0006952">
    <property type="term" value="P:defense response"/>
    <property type="evidence" value="ECO:0007669"/>
    <property type="project" value="UniProtKB-KW"/>
</dbReference>
<dbReference type="GO" id="GO:0006513">
    <property type="term" value="P:protein monoubiquitination"/>
    <property type="evidence" value="ECO:0000315"/>
    <property type="project" value="UniProtKB"/>
</dbReference>
<dbReference type="CDD" id="cd16461">
    <property type="entry name" value="RING-H2_EL5-like"/>
    <property type="match status" value="1"/>
</dbReference>
<dbReference type="Gene3D" id="3.30.40.10">
    <property type="entry name" value="Zinc/RING finger domain, C3HC4 (zinc finger)"/>
    <property type="match status" value="1"/>
</dbReference>
<dbReference type="InterPro" id="IPR052788">
    <property type="entry name" value="RING-type_E3_ligase_ATL"/>
</dbReference>
<dbReference type="InterPro" id="IPR001841">
    <property type="entry name" value="Znf_RING"/>
</dbReference>
<dbReference type="InterPro" id="IPR013083">
    <property type="entry name" value="Znf_RING/FYVE/PHD"/>
</dbReference>
<dbReference type="PANTHER" id="PTHR45798:SF70">
    <property type="entry name" value="E3 UBIQUITIN-PROTEIN LIGASE ATL45-RELATED"/>
    <property type="match status" value="1"/>
</dbReference>
<dbReference type="PANTHER" id="PTHR45798">
    <property type="entry name" value="RING-H2 FINGER PROTEIN ATL61-RELATED-RELATED"/>
    <property type="match status" value="1"/>
</dbReference>
<dbReference type="Pfam" id="PF13639">
    <property type="entry name" value="zf-RING_2"/>
    <property type="match status" value="1"/>
</dbReference>
<dbReference type="SMART" id="SM00184">
    <property type="entry name" value="RING"/>
    <property type="match status" value="1"/>
</dbReference>
<dbReference type="SUPFAM" id="SSF57850">
    <property type="entry name" value="RING/U-box"/>
    <property type="match status" value="1"/>
</dbReference>
<dbReference type="PROSITE" id="PS50089">
    <property type="entry name" value="ZF_RING_2"/>
    <property type="match status" value="1"/>
</dbReference>
<keyword id="KW-0472">Membrane</keyword>
<keyword id="KW-0479">Metal-binding</keyword>
<keyword id="KW-0611">Plant defense</keyword>
<keyword id="KW-1185">Reference proteome</keyword>
<keyword id="KW-0808">Transferase</keyword>
<keyword id="KW-0812">Transmembrane</keyword>
<keyword id="KW-1133">Transmembrane helix</keyword>
<keyword id="KW-0833">Ubl conjugation pathway</keyword>
<keyword id="KW-0862">Zinc</keyword>
<keyword id="KW-0863">Zinc-finger</keyword>
<feature type="chain" id="PRO_0000055805" description="Probable E3 ubiquitin-protein ligase ATL45">
    <location>
        <begin position="1"/>
        <end position="200"/>
    </location>
</feature>
<feature type="transmembrane region" description="Helical" evidence="2">
    <location>
        <begin position="26"/>
        <end position="46"/>
    </location>
</feature>
<feature type="zinc finger region" description="RING-type; atypical" evidence="3">
    <location>
        <begin position="113"/>
        <end position="155"/>
    </location>
</feature>
<sequence>MTRSSRFLGTASPPPPEEILAAETDMVVILSALLCALVCVAGLAAVARCAWLRRLTGVNPAAVGEAPPPNKGLKKKALQALPKSTYTASASTAAAADDLPCSSVGDGDSSTECAICITEFSEGEEIRILPLCSHAFHVACIDKWLTSRSSCPSCRRILVPVKCDRCGHHASTAETQVKDQPPHHQHPSQFTSAIIPAFLP</sequence>
<comment type="function">
    <text evidence="5 9">E3 ubiquitin-protein ligase that possess E3 ubiquitin ligase activity in vitro and mediates protein monoubiquitination (PubMed:32404997). Triggers the monoubiquitination of phosphorylated BIK1 in response to pathogen-associated molecular pattern (PAMP) detection (PubMed:32404997). May be involved in the early steps of the plant defense signaling pathway (Probable).</text>
</comment>
<comment type="catalytic activity">
    <reaction evidence="8">
        <text>S-ubiquitinyl-[E2 ubiquitin-conjugating enzyme]-L-cysteine + [acceptor protein]-L-lysine = [E2 ubiquitin-conjugating enzyme]-L-cysteine + N(6)-ubiquitinyl-[acceptor protein]-L-lysine.</text>
        <dbReference type="EC" id="2.3.2.27"/>
    </reaction>
</comment>
<comment type="pathway">
    <text evidence="8">Protein modification; protein ubiquitination.</text>
</comment>
<comment type="subunit">
    <text evidence="5">Interacts with BIK1.</text>
</comment>
<comment type="subcellular location">
    <subcellularLocation>
        <location evidence="8">Membrane</location>
        <topology evidence="8">Single-pass membrane protein</topology>
    </subcellularLocation>
</comment>
<comment type="induction">
    <text evidence="4">Up-regulated by chitin.</text>
</comment>
<comment type="domain">
    <text evidence="1">The RING-type zinc finger domain mediates binding to an E2 ubiquitin-conjugating enzyme.</text>
</comment>
<comment type="similarity">
    <text evidence="8">Belongs to the RING-type zinc finger family. ATL subfamily.</text>
</comment>
<reference key="1">
    <citation type="journal article" date="1998" name="FEBS Lett.">
        <title>Widespread occurrence of a highly conserved RING-H2 zinc finger motif in the model plant Arabidopsis thaliana.</title>
        <authorList>
            <person name="Jensen R.B."/>
            <person name="Jensen K.L."/>
            <person name="Jespersen H.M."/>
            <person name="Skriver K."/>
        </authorList>
    </citation>
    <scope>NUCLEOTIDE SEQUENCE [MRNA]</scope>
    <source>
        <strain>cv. Columbia</strain>
    </source>
</reference>
<reference key="2">
    <citation type="journal article" date="2005" name="Plant Physiol.">
        <title>Functional analysis of the RING-type ubiquitin ligase family of Arabidopsis.</title>
        <authorList>
            <person name="Stone S.L."/>
            <person name="Hauksdottir H."/>
            <person name="Troy A."/>
            <person name="Herschleb J."/>
            <person name="Kraft E."/>
            <person name="Callis J."/>
        </authorList>
    </citation>
    <scope>NUCLEOTIDE SEQUENCE [MRNA]</scope>
    <source>
        <strain>cv. Columbia</strain>
        <tissue>Leaf</tissue>
    </source>
</reference>
<reference key="3">
    <citation type="journal article" date="1999" name="Nature">
        <title>Sequence and analysis of chromosome 4 of the plant Arabidopsis thaliana.</title>
        <authorList>
            <person name="Mayer K.F.X."/>
            <person name="Schueller C."/>
            <person name="Wambutt R."/>
            <person name="Murphy G."/>
            <person name="Volckaert G."/>
            <person name="Pohl T."/>
            <person name="Duesterhoeft A."/>
            <person name="Stiekema W."/>
            <person name="Entian K.-D."/>
            <person name="Terryn N."/>
            <person name="Harris B."/>
            <person name="Ansorge W."/>
            <person name="Brandt P."/>
            <person name="Grivell L.A."/>
            <person name="Rieger M."/>
            <person name="Weichselgartner M."/>
            <person name="de Simone V."/>
            <person name="Obermaier B."/>
            <person name="Mache R."/>
            <person name="Mueller M."/>
            <person name="Kreis M."/>
            <person name="Delseny M."/>
            <person name="Puigdomenech P."/>
            <person name="Watson M."/>
            <person name="Schmidtheini T."/>
            <person name="Reichert B."/>
            <person name="Portetelle D."/>
            <person name="Perez-Alonso M."/>
            <person name="Boutry M."/>
            <person name="Bancroft I."/>
            <person name="Vos P."/>
            <person name="Hoheisel J."/>
            <person name="Zimmermann W."/>
            <person name="Wedler H."/>
            <person name="Ridley P."/>
            <person name="Langham S.-A."/>
            <person name="McCullagh B."/>
            <person name="Bilham L."/>
            <person name="Robben J."/>
            <person name="van der Schueren J."/>
            <person name="Grymonprez B."/>
            <person name="Chuang Y.-J."/>
            <person name="Vandenbussche F."/>
            <person name="Braeken M."/>
            <person name="Weltjens I."/>
            <person name="Voet M."/>
            <person name="Bastiaens I."/>
            <person name="Aert R."/>
            <person name="Defoor E."/>
            <person name="Weitzenegger T."/>
            <person name="Bothe G."/>
            <person name="Ramsperger U."/>
            <person name="Hilbert H."/>
            <person name="Braun M."/>
            <person name="Holzer E."/>
            <person name="Brandt A."/>
            <person name="Peters S."/>
            <person name="van Staveren M."/>
            <person name="Dirkse W."/>
            <person name="Mooijman P."/>
            <person name="Klein Lankhorst R."/>
            <person name="Rose M."/>
            <person name="Hauf J."/>
            <person name="Koetter P."/>
            <person name="Berneiser S."/>
            <person name="Hempel S."/>
            <person name="Feldpausch M."/>
            <person name="Lamberth S."/>
            <person name="Van den Daele H."/>
            <person name="De Keyser A."/>
            <person name="Buysshaert C."/>
            <person name="Gielen J."/>
            <person name="Villarroel R."/>
            <person name="De Clercq R."/>
            <person name="van Montagu M."/>
            <person name="Rogers J."/>
            <person name="Cronin A."/>
            <person name="Quail M.A."/>
            <person name="Bray-Allen S."/>
            <person name="Clark L."/>
            <person name="Doggett J."/>
            <person name="Hall S."/>
            <person name="Kay M."/>
            <person name="Lennard N."/>
            <person name="McLay K."/>
            <person name="Mayes R."/>
            <person name="Pettett A."/>
            <person name="Rajandream M.A."/>
            <person name="Lyne M."/>
            <person name="Benes V."/>
            <person name="Rechmann S."/>
            <person name="Borkova D."/>
            <person name="Bloecker H."/>
            <person name="Scharfe M."/>
            <person name="Grimm M."/>
            <person name="Loehnert T.-H."/>
            <person name="Dose S."/>
            <person name="de Haan M."/>
            <person name="Maarse A.C."/>
            <person name="Schaefer M."/>
            <person name="Mueller-Auer S."/>
            <person name="Gabel C."/>
            <person name="Fuchs M."/>
            <person name="Fartmann B."/>
            <person name="Granderath K."/>
            <person name="Dauner D."/>
            <person name="Herzl A."/>
            <person name="Neumann S."/>
            <person name="Argiriou A."/>
            <person name="Vitale D."/>
            <person name="Liguori R."/>
            <person name="Piravandi E."/>
            <person name="Massenet O."/>
            <person name="Quigley F."/>
            <person name="Clabauld G."/>
            <person name="Muendlein A."/>
            <person name="Felber R."/>
            <person name="Schnabl S."/>
            <person name="Hiller R."/>
            <person name="Schmidt W."/>
            <person name="Lecharny A."/>
            <person name="Aubourg S."/>
            <person name="Chefdor F."/>
            <person name="Cooke R."/>
            <person name="Berger C."/>
            <person name="Monfort A."/>
            <person name="Casacuberta E."/>
            <person name="Gibbons T."/>
            <person name="Weber N."/>
            <person name="Vandenbol M."/>
            <person name="Bargues M."/>
            <person name="Terol J."/>
            <person name="Torres A."/>
            <person name="Perez-Perez A."/>
            <person name="Purnelle B."/>
            <person name="Bent E."/>
            <person name="Johnson S."/>
            <person name="Tacon D."/>
            <person name="Jesse T."/>
            <person name="Heijnen L."/>
            <person name="Schwarz S."/>
            <person name="Scholler P."/>
            <person name="Heber S."/>
            <person name="Francs P."/>
            <person name="Bielke C."/>
            <person name="Frishman D."/>
            <person name="Haase D."/>
            <person name="Lemcke K."/>
            <person name="Mewes H.-W."/>
            <person name="Stocker S."/>
            <person name="Zaccaria P."/>
            <person name="Bevan M."/>
            <person name="Wilson R.K."/>
            <person name="de la Bastide M."/>
            <person name="Habermann K."/>
            <person name="Parnell L."/>
            <person name="Dedhia N."/>
            <person name="Gnoj L."/>
            <person name="Schutz K."/>
            <person name="Huang E."/>
            <person name="Spiegel L."/>
            <person name="Sekhon M."/>
            <person name="Murray J."/>
            <person name="Sheet P."/>
            <person name="Cordes M."/>
            <person name="Abu-Threideh J."/>
            <person name="Stoneking T."/>
            <person name="Kalicki J."/>
            <person name="Graves T."/>
            <person name="Harmon G."/>
            <person name="Edwards J."/>
            <person name="Latreille P."/>
            <person name="Courtney L."/>
            <person name="Cloud J."/>
            <person name="Abbott A."/>
            <person name="Scott K."/>
            <person name="Johnson D."/>
            <person name="Minx P."/>
            <person name="Bentley D."/>
            <person name="Fulton B."/>
            <person name="Miller N."/>
            <person name="Greco T."/>
            <person name="Kemp K."/>
            <person name="Kramer J."/>
            <person name="Fulton L."/>
            <person name="Mardis E."/>
            <person name="Dante M."/>
            <person name="Pepin K."/>
            <person name="Hillier L.W."/>
            <person name="Nelson J."/>
            <person name="Spieth J."/>
            <person name="Ryan E."/>
            <person name="Andrews S."/>
            <person name="Geisel C."/>
            <person name="Layman D."/>
            <person name="Du H."/>
            <person name="Ali J."/>
            <person name="Berghoff A."/>
            <person name="Jones K."/>
            <person name="Drone K."/>
            <person name="Cotton M."/>
            <person name="Joshu C."/>
            <person name="Antonoiu B."/>
            <person name="Zidanic M."/>
            <person name="Strong C."/>
            <person name="Sun H."/>
            <person name="Lamar B."/>
            <person name="Yordan C."/>
            <person name="Ma P."/>
            <person name="Zhong J."/>
            <person name="Preston R."/>
            <person name="Vil D."/>
            <person name="Shekher M."/>
            <person name="Matero A."/>
            <person name="Shah R."/>
            <person name="Swaby I.K."/>
            <person name="O'Shaughnessy A."/>
            <person name="Rodriguez M."/>
            <person name="Hoffman J."/>
            <person name="Till S."/>
            <person name="Granat S."/>
            <person name="Shohdy N."/>
            <person name="Hasegawa A."/>
            <person name="Hameed A."/>
            <person name="Lodhi M."/>
            <person name="Johnson A."/>
            <person name="Chen E."/>
            <person name="Marra M.A."/>
            <person name="Martienssen R."/>
            <person name="McCombie W.R."/>
        </authorList>
    </citation>
    <scope>NUCLEOTIDE SEQUENCE [LARGE SCALE GENOMIC DNA]</scope>
    <source>
        <strain>cv. Columbia</strain>
    </source>
</reference>
<reference key="4">
    <citation type="journal article" date="2017" name="Plant J.">
        <title>Araport11: a complete reannotation of the Arabidopsis thaliana reference genome.</title>
        <authorList>
            <person name="Cheng C.Y."/>
            <person name="Krishnakumar V."/>
            <person name="Chan A.P."/>
            <person name="Thibaud-Nissen F."/>
            <person name="Schobel S."/>
            <person name="Town C.D."/>
        </authorList>
    </citation>
    <scope>GENOME REANNOTATION</scope>
    <source>
        <strain>cv. Columbia</strain>
    </source>
</reference>
<reference key="5">
    <citation type="submission" date="2007-06" db="EMBL/GenBank/DDBJ databases">
        <title>Arabidopsis ORF clones.</title>
        <authorList>
            <person name="Bautista-Mercan V.R."/>
            <person name="Kim C.J."/>
            <person name="Chen H."/>
            <person name="Quan R."/>
            <person name="De Los Reyes C."/>
            <person name="Ecker J.R."/>
        </authorList>
    </citation>
    <scope>NUCLEOTIDE SEQUENCE [LARGE SCALE MRNA]</scope>
    <source>
        <strain>cv. Columbia</strain>
    </source>
</reference>
<reference key="6">
    <citation type="submission" date="2002-03" db="EMBL/GenBank/DDBJ databases">
        <title>Full-length cDNA from Arabidopsis thaliana.</title>
        <authorList>
            <person name="Brover V.V."/>
            <person name="Troukhan M.E."/>
            <person name="Alexandrov N.A."/>
            <person name="Lu Y.-P."/>
            <person name="Flavell R.B."/>
            <person name="Feldmann K.A."/>
        </authorList>
    </citation>
    <scope>NUCLEOTIDE SEQUENCE [LARGE SCALE MRNA]</scope>
</reference>
<reference key="7">
    <citation type="journal article" date="2002" name="Genome Biol.">
        <title>Evaluation and classification of RING-finger domains encoded by the Arabidopsis genome.</title>
        <authorList>
            <person name="Kosarev P."/>
            <person name="Mayer K.F.X."/>
            <person name="Hardtke C.S."/>
        </authorList>
    </citation>
    <scope>GENE FAMILY ORGANIZATION</scope>
</reference>
<reference key="8">
    <citation type="journal article" date="2006" name="J. Mol. Evol.">
        <title>The ATL gene family from Arabidopsis thaliana and Oryza sativa comprises a large number of putative ubiquitin ligases of the RING-H2 type.</title>
        <authorList>
            <person name="Serrano M."/>
            <person name="Parra S."/>
            <person name="Alcaraz L.D."/>
            <person name="Guzman P."/>
        </authorList>
    </citation>
    <scope>NOMENCLATURE</scope>
    <scope>GENE FAMILY ORGANIZATION</scope>
</reference>
<reference key="9">
    <citation type="journal article" date="2007" name="Mol. Plant Microbe Interact.">
        <title>Identification of 118 Arabidopsis transcription factor and 30 ubiquitin-ligase genes responding to chitin, a plant-defense elicitor.</title>
        <authorList>
            <person name="Libault M."/>
            <person name="Wan J."/>
            <person name="Czechowski T."/>
            <person name="Udvardi M."/>
            <person name="Stacey G."/>
        </authorList>
    </citation>
    <scope>INDUCTION BY CHITIN</scope>
</reference>
<reference key="10">
    <citation type="journal article" date="2020" name="Nature">
        <title>Ligand-induced monoubiquitination of BIK1 regulates plant immunity.</title>
        <authorList>
            <person name="Ma X."/>
            <person name="Claus L.A.N."/>
            <person name="Leslie M.E."/>
            <person name="Tao K."/>
            <person name="Wu Z."/>
            <person name="Liu J."/>
            <person name="Yu X."/>
            <person name="Li B."/>
            <person name="Zhou J."/>
            <person name="Savatin D.V."/>
            <person name="Peng J."/>
            <person name="Tyler B.M."/>
            <person name="Heese A."/>
            <person name="Russinova E."/>
            <person name="He P."/>
            <person name="Shan L."/>
        </authorList>
    </citation>
    <scope>FUNCTION</scope>
    <scope>INTERACTION WITH BIK1</scope>
</reference>
<gene>
    <name evidence="6" type="primary">ATL45</name>
    <name evidence="7" type="synonym">RHA3B</name>
    <name evidence="10" type="ordered locus">At4g35480</name>
    <name evidence="11" type="ORF">F15J1.50</name>
</gene>
<accession>Q9ZT49</accession>
<accession>Q4TU10</accession>
<evidence type="ECO:0000250" key="1"/>
<evidence type="ECO:0000255" key="2"/>
<evidence type="ECO:0000255" key="3">
    <source>
        <dbReference type="PROSITE-ProRule" id="PRU00175"/>
    </source>
</evidence>
<evidence type="ECO:0000269" key="4">
    <source>
    </source>
</evidence>
<evidence type="ECO:0000269" key="5">
    <source>
    </source>
</evidence>
<evidence type="ECO:0000303" key="6">
    <source>
    </source>
</evidence>
<evidence type="ECO:0000303" key="7">
    <source>
    </source>
</evidence>
<evidence type="ECO:0000305" key="8"/>
<evidence type="ECO:0000305" key="9">
    <source>
    </source>
</evidence>
<evidence type="ECO:0000312" key="10">
    <source>
        <dbReference type="Araport" id="AT4G35480"/>
    </source>
</evidence>
<evidence type="ECO:0000312" key="11">
    <source>
        <dbReference type="EMBL" id="CAB54876.1"/>
    </source>
</evidence>
<protein>
    <recommendedName>
        <fullName evidence="8">Probable E3 ubiquitin-protein ligase ATL45</fullName>
        <ecNumber evidence="8">2.3.2.27</ecNumber>
    </recommendedName>
    <alternativeName>
        <fullName evidence="7">RING-H2 finger A3b</fullName>
    </alternativeName>
    <alternativeName>
        <fullName evidence="8">RING-H2 finger protein ATL45</fullName>
    </alternativeName>
    <alternativeName>
        <fullName evidence="8">RING-H2 zinc finger protein RHA3b</fullName>
    </alternativeName>
    <alternativeName>
        <fullName evidence="8">RING-type E3 ubiquitin transferase ATL45</fullName>
    </alternativeName>
</protein>